<accession>A8E4X8</accession>
<evidence type="ECO:0000250" key="1">
    <source>
        <dbReference type="UniProtKB" id="Q8N9B5"/>
    </source>
</evidence>
<evidence type="ECO:0000250" key="2">
    <source>
        <dbReference type="UniProtKB" id="Q9QXM1"/>
    </source>
</evidence>
<evidence type="ECO:0000255" key="3"/>
<evidence type="ECO:0000255" key="4">
    <source>
        <dbReference type="PROSITE-ProRule" id="PRU00406"/>
    </source>
</evidence>
<evidence type="ECO:0000256" key="5">
    <source>
        <dbReference type="SAM" id="MobiDB-lite"/>
    </source>
</evidence>
<evidence type="ECO:0000305" key="6"/>
<sequence>MSFNLEDTLESDWVAVRPNVFEEKERRKFVFIVAWNEVEGKFAITCHNRTAQRQRSADKAGGRSPARQQQRDSPAQSPARKAREEPEEGEEEECSWAGLFSFQDLRAVHQQLCSVSSELEPCLPTFPEEPSGVWSVLFGPSELSEAEVEDLGRQLRLYLGHALDTSGWKILSQVLFADSDDPEEYYQSLSELRHKGYEEGLQRARKRLQELLEKHKTTEVMVDLLDLYQLEDEAYSNVVEATTELYQYLLQPFRDMRELAMLRRQQIKISIENDYLGPRRIESLKKEDADWQKKAHMAVLSIQDLTVKYFEITARAQKAVFDRMRGDQKKFGKTAWAAAVERVEKLQYGVAKETLQLMRAKEICLEQKKHALKDQMQSLQGGTEAIAVLDELEADYYDHQLQLYEVQFEILKCEELLLTAQLESIKRQISEKTDEVVYYDTYESMEAMLATEDMAASIHIQRVELQKLQQKVRQLEAKRGRISAKKAYLRNKKEICIAKHSEKIQQRLHSDEGYRAAQLKQEKQEDEEERKSTWVSQERQKTLDRLRTFKQRHPGQVVLKSTRLRFSHERRRSTIRTTSSTDAPQSLSVSIQTQGLSDLGDTEVLQPIKTQKPETTTQLEDSSLPPNAITSELPLMTSLPTFTHEKLEPEISTLQPSSLPASPPPPPPPLPPPPPPPLPPSKQDTDTLEIRVIHVKKETEEKDGAKPVSGPLAQLFDSSQLLNARKTLKKTGALEGIQRRRVSSPMDEVLASLKRGSFHLKKVEQRALPPFPDEDESNNILAQIRKGVKLKKVQKEALRESFTLLPDTDPLTRSIHEALRRIKEASPESEDEEESLPCTDWEN</sequence>
<proteinExistence type="evidence at transcript level"/>
<comment type="function">
    <text evidence="1 2">Acts both as a nuclear p53/TP53-cofactor and a cytoplasmic regulator of actin dynamics depending on conditions. In nucleus, acts as a cofactor that increases p53/TP53 response. Increases p53/TP53-dependent transcription and apoptosis, suggesting an important role in p53/TP53 stress response such as DNA damage. In cytoplasm, acts as a nucleation-promoting factor for both branched and unbranched actin filaments. Activates the Arp2/3 complex to induce branched actin filament networks. Also catalyzes actin polymerization in the absence of Arp2/3, creating unbranched filaments. Contributes to cell motility by controlling actin dynamics.</text>
</comment>
<comment type="subcellular location">
    <subcellularLocation>
        <location evidence="2">Nucleus</location>
    </subcellularLocation>
    <subcellularLocation>
        <location evidence="1">Cytoplasmic vesicle</location>
    </subcellularLocation>
    <subcellularLocation>
        <location evidence="1">Cytoplasm</location>
        <location evidence="1">Cytoskeleton</location>
    </subcellularLocation>
    <subcellularLocation>
        <location>Endomembrane system</location>
        <topology>Lipid-anchor</topology>
    </subcellularLocation>
    <subcellularLocation>
        <location evidence="1">Cytoplasmic vesicle</location>
        <location evidence="1">Autophagosome membrane</location>
    </subcellularLocation>
    <text evidence="2">Localizes to the nucleus in most cell types. In primary neutrophils, it colocalizes with actin filaments at the leading edge and is excluded from the nucleus (By similarity).</text>
</comment>
<comment type="similarity">
    <text evidence="6">Belongs to the JMY family.</text>
</comment>
<reference key="1">
    <citation type="submission" date="2007-09" db="EMBL/GenBank/DDBJ databases">
        <authorList>
            <consortium name="NIH - Xenopus Gene Collection (XGC) project"/>
        </authorList>
    </citation>
    <scope>NUCLEOTIDE SEQUENCE [LARGE SCALE MRNA]</scope>
    <source>
        <tissue>Brain</tissue>
    </source>
</reference>
<feature type="chain" id="PRO_0000324614" description="Junction-mediating and -regulatory protein">
    <location>
        <begin position="1"/>
        <end position="843"/>
    </location>
</feature>
<feature type="domain" description="WH2" evidence="4">
    <location>
        <begin position="776"/>
        <end position="793"/>
    </location>
</feature>
<feature type="region of interest" description="Disordered" evidence="5">
    <location>
        <begin position="49"/>
        <end position="91"/>
    </location>
</feature>
<feature type="region of interest" description="Disordered" evidence="5">
    <location>
        <begin position="518"/>
        <end position="537"/>
    </location>
</feature>
<feature type="region of interest" description="Disordered" evidence="5">
    <location>
        <begin position="558"/>
        <end position="632"/>
    </location>
</feature>
<feature type="region of interest" description="Disordered" evidence="5">
    <location>
        <begin position="652"/>
        <end position="688"/>
    </location>
</feature>
<feature type="region of interest" description="Disordered" evidence="5">
    <location>
        <begin position="821"/>
        <end position="843"/>
    </location>
</feature>
<feature type="coiled-coil region" evidence="3">
    <location>
        <begin position="190"/>
        <end position="225"/>
    </location>
</feature>
<feature type="coiled-coil region" evidence="3">
    <location>
        <begin position="359"/>
        <end position="385"/>
    </location>
</feature>
<feature type="coiled-coil region" evidence="3">
    <location>
        <begin position="416"/>
        <end position="487"/>
    </location>
</feature>
<feature type="compositionally biased region" description="Polar residues" evidence="5">
    <location>
        <begin position="66"/>
        <end position="76"/>
    </location>
</feature>
<feature type="compositionally biased region" description="Basic residues" evidence="5">
    <location>
        <begin position="562"/>
        <end position="574"/>
    </location>
</feature>
<feature type="compositionally biased region" description="Polar residues" evidence="5">
    <location>
        <begin position="582"/>
        <end position="596"/>
    </location>
</feature>
<feature type="compositionally biased region" description="Polar residues" evidence="5">
    <location>
        <begin position="613"/>
        <end position="630"/>
    </location>
</feature>
<feature type="compositionally biased region" description="Pro residues" evidence="5">
    <location>
        <begin position="661"/>
        <end position="680"/>
    </location>
</feature>
<feature type="compositionally biased region" description="Acidic residues" evidence="5">
    <location>
        <begin position="827"/>
        <end position="843"/>
    </location>
</feature>
<protein>
    <recommendedName>
        <fullName>Junction-mediating and -regulatory protein</fullName>
    </recommendedName>
</protein>
<name>JMY_XENTR</name>
<keyword id="KW-0009">Actin-binding</keyword>
<keyword id="KW-0175">Coiled coil</keyword>
<keyword id="KW-0963">Cytoplasm</keyword>
<keyword id="KW-0968">Cytoplasmic vesicle</keyword>
<keyword id="KW-0206">Cytoskeleton</keyword>
<keyword id="KW-0227">DNA damage</keyword>
<keyword id="KW-0234">DNA repair</keyword>
<keyword id="KW-0449">Lipoprotein</keyword>
<keyword id="KW-0472">Membrane</keyword>
<keyword id="KW-0539">Nucleus</keyword>
<keyword id="KW-1185">Reference proteome</keyword>
<dbReference type="EMBL" id="BC153370">
    <property type="protein sequence ID" value="AAI53371.1"/>
    <property type="molecule type" value="mRNA"/>
</dbReference>
<dbReference type="RefSeq" id="NP_001106426.1">
    <property type="nucleotide sequence ID" value="NM_001112955.1"/>
</dbReference>
<dbReference type="SMR" id="A8E4X8"/>
<dbReference type="FunCoup" id="A8E4X8">
    <property type="interactions" value="1749"/>
</dbReference>
<dbReference type="STRING" id="8364.ENSXETP00000011125"/>
<dbReference type="PaxDb" id="8364-ENSXETP00000001126"/>
<dbReference type="GeneID" id="100127594"/>
<dbReference type="KEGG" id="xtr:100127594"/>
<dbReference type="AGR" id="Xenbase:XB-GENE-5832535"/>
<dbReference type="CTD" id="133746"/>
<dbReference type="Xenbase" id="XB-GENE-5832535">
    <property type="gene designation" value="jmy"/>
</dbReference>
<dbReference type="eggNOG" id="ENOG502QRHU">
    <property type="taxonomic scope" value="Eukaryota"/>
</dbReference>
<dbReference type="InParanoid" id="A8E4X8"/>
<dbReference type="OMA" id="PGEECSW"/>
<dbReference type="OrthoDB" id="6284683at2759"/>
<dbReference type="Reactome" id="R-XTR-6804760">
    <property type="pathway name" value="Regulation of TP53 Activity through Methylation"/>
</dbReference>
<dbReference type="Proteomes" id="UP000008143">
    <property type="component" value="Chromosome 1"/>
</dbReference>
<dbReference type="GO" id="GO:0000421">
    <property type="term" value="C:autophagosome membrane"/>
    <property type="evidence" value="ECO:0000250"/>
    <property type="project" value="UniProtKB"/>
</dbReference>
<dbReference type="GO" id="GO:0031252">
    <property type="term" value="C:cell leading edge"/>
    <property type="evidence" value="ECO:0000250"/>
    <property type="project" value="UniProtKB"/>
</dbReference>
<dbReference type="GO" id="GO:0031410">
    <property type="term" value="C:cytoplasmic vesicle"/>
    <property type="evidence" value="ECO:0000250"/>
    <property type="project" value="UniProtKB"/>
</dbReference>
<dbReference type="GO" id="GO:0005856">
    <property type="term" value="C:cytoskeleton"/>
    <property type="evidence" value="ECO:0007669"/>
    <property type="project" value="UniProtKB-SubCell"/>
</dbReference>
<dbReference type="GO" id="GO:0012505">
    <property type="term" value="C:endomembrane system"/>
    <property type="evidence" value="ECO:0007669"/>
    <property type="project" value="UniProtKB-SubCell"/>
</dbReference>
<dbReference type="GO" id="GO:0005634">
    <property type="term" value="C:nucleus"/>
    <property type="evidence" value="ECO:0000250"/>
    <property type="project" value="UniProtKB"/>
</dbReference>
<dbReference type="GO" id="GO:0003779">
    <property type="term" value="F:actin binding"/>
    <property type="evidence" value="ECO:0007669"/>
    <property type="project" value="UniProtKB-KW"/>
</dbReference>
<dbReference type="GO" id="GO:0008017">
    <property type="term" value="F:microtubule binding"/>
    <property type="evidence" value="ECO:0000250"/>
    <property type="project" value="UniProtKB"/>
</dbReference>
<dbReference type="GO" id="GO:0070060">
    <property type="term" value="P:'de novo' actin filament nucleation"/>
    <property type="evidence" value="ECO:0000250"/>
    <property type="project" value="UniProtKB"/>
</dbReference>
<dbReference type="GO" id="GO:0070358">
    <property type="term" value="P:actin polymerization-dependent cell motility"/>
    <property type="evidence" value="ECO:0000250"/>
    <property type="project" value="UniProtKB"/>
</dbReference>
<dbReference type="GO" id="GO:0034314">
    <property type="term" value="P:Arp2/3 complex-mediated actin nucleation"/>
    <property type="evidence" value="ECO:0000250"/>
    <property type="project" value="UniProtKB"/>
</dbReference>
<dbReference type="GO" id="GO:0009267">
    <property type="term" value="P:cellular response to starvation"/>
    <property type="evidence" value="ECO:0000250"/>
    <property type="project" value="UniProtKB"/>
</dbReference>
<dbReference type="GO" id="GO:0006281">
    <property type="term" value="P:DNA repair"/>
    <property type="evidence" value="ECO:0007669"/>
    <property type="project" value="UniProtKB-KW"/>
</dbReference>
<dbReference type="InterPro" id="IPR031738">
    <property type="entry name" value="JMY/WHAMM"/>
</dbReference>
<dbReference type="InterPro" id="IPR031808">
    <property type="entry name" value="JMY/WHAMM_N"/>
</dbReference>
<dbReference type="InterPro" id="IPR003124">
    <property type="entry name" value="WH2_dom"/>
</dbReference>
<dbReference type="PANTHER" id="PTHR23330:SF8">
    <property type="entry name" value="JUNCTION-MEDIATING AND -REGULATORY PROTEIN"/>
    <property type="match status" value="1"/>
</dbReference>
<dbReference type="PANTHER" id="PTHR23330">
    <property type="entry name" value="P300 TRANSCRIPTIONAL COFACTOR JMY-RELATED"/>
    <property type="match status" value="1"/>
</dbReference>
<dbReference type="Pfam" id="PF15871">
    <property type="entry name" value="JMY"/>
    <property type="match status" value="1"/>
</dbReference>
<dbReference type="Pfam" id="PF15920">
    <property type="entry name" value="WHAMM-JMY_N"/>
    <property type="match status" value="1"/>
</dbReference>
<dbReference type="SUPFAM" id="SSF101447">
    <property type="entry name" value="Formin homology 2 domain (FH2 domain)"/>
    <property type="match status" value="1"/>
</dbReference>
<dbReference type="PROSITE" id="PS51082">
    <property type="entry name" value="WH2"/>
    <property type="match status" value="1"/>
</dbReference>
<gene>
    <name type="primary">jmy</name>
</gene>
<organism>
    <name type="scientific">Xenopus tropicalis</name>
    <name type="common">Western clawed frog</name>
    <name type="synonym">Silurana tropicalis</name>
    <dbReference type="NCBI Taxonomy" id="8364"/>
    <lineage>
        <taxon>Eukaryota</taxon>
        <taxon>Metazoa</taxon>
        <taxon>Chordata</taxon>
        <taxon>Craniata</taxon>
        <taxon>Vertebrata</taxon>
        <taxon>Euteleostomi</taxon>
        <taxon>Amphibia</taxon>
        <taxon>Batrachia</taxon>
        <taxon>Anura</taxon>
        <taxon>Pipoidea</taxon>
        <taxon>Pipidae</taxon>
        <taxon>Xenopodinae</taxon>
        <taxon>Xenopus</taxon>
        <taxon>Silurana</taxon>
    </lineage>
</organism>